<proteinExistence type="evidence at protein level"/>
<accession>Q7A7B4</accession>
<gene>
    <name evidence="1" type="primary">glmU</name>
    <name type="synonym">gcaD</name>
    <name type="ordered locus">SA0457</name>
</gene>
<reference key="1">
    <citation type="journal article" date="2001" name="Lancet">
        <title>Whole genome sequencing of meticillin-resistant Staphylococcus aureus.</title>
        <authorList>
            <person name="Kuroda M."/>
            <person name="Ohta T."/>
            <person name="Uchiyama I."/>
            <person name="Baba T."/>
            <person name="Yuzawa H."/>
            <person name="Kobayashi I."/>
            <person name="Cui L."/>
            <person name="Oguchi A."/>
            <person name="Aoki K."/>
            <person name="Nagai Y."/>
            <person name="Lian J.-Q."/>
            <person name="Ito T."/>
            <person name="Kanamori M."/>
            <person name="Matsumaru H."/>
            <person name="Maruyama A."/>
            <person name="Murakami H."/>
            <person name="Hosoyama A."/>
            <person name="Mizutani-Ui Y."/>
            <person name="Takahashi N.K."/>
            <person name="Sawano T."/>
            <person name="Inoue R."/>
            <person name="Kaito C."/>
            <person name="Sekimizu K."/>
            <person name="Hirakawa H."/>
            <person name="Kuhara S."/>
            <person name="Goto S."/>
            <person name="Yabuzaki J."/>
            <person name="Kanehisa M."/>
            <person name="Yamashita A."/>
            <person name="Oshima K."/>
            <person name="Furuya K."/>
            <person name="Yoshino C."/>
            <person name="Shiba T."/>
            <person name="Hattori M."/>
            <person name="Ogasawara N."/>
            <person name="Hayashi H."/>
            <person name="Hiramatsu K."/>
        </authorList>
    </citation>
    <scope>NUCLEOTIDE SEQUENCE [LARGE SCALE GENOMIC DNA]</scope>
    <source>
        <strain>N315</strain>
    </source>
</reference>
<reference key="2">
    <citation type="submission" date="2007-10" db="UniProtKB">
        <title>Shotgun proteomic analysis of total and membrane protein extracts of S. aureus strain N315.</title>
        <authorList>
            <person name="Vaezzadeh A.R."/>
            <person name="Deshusses J."/>
            <person name="Lescuyer P."/>
            <person name="Hochstrasser D.F."/>
        </authorList>
    </citation>
    <scope>IDENTIFICATION BY MASS SPECTROMETRY [LARGE SCALE ANALYSIS]</scope>
    <source>
        <strain>N315</strain>
    </source>
</reference>
<organism>
    <name type="scientific">Staphylococcus aureus (strain N315)</name>
    <dbReference type="NCBI Taxonomy" id="158879"/>
    <lineage>
        <taxon>Bacteria</taxon>
        <taxon>Bacillati</taxon>
        <taxon>Bacillota</taxon>
        <taxon>Bacilli</taxon>
        <taxon>Bacillales</taxon>
        <taxon>Staphylococcaceae</taxon>
        <taxon>Staphylococcus</taxon>
    </lineage>
</organism>
<evidence type="ECO:0000255" key="1">
    <source>
        <dbReference type="HAMAP-Rule" id="MF_01631"/>
    </source>
</evidence>
<keyword id="KW-0012">Acyltransferase</keyword>
<keyword id="KW-0133">Cell shape</keyword>
<keyword id="KW-0961">Cell wall biogenesis/degradation</keyword>
<keyword id="KW-0963">Cytoplasm</keyword>
<keyword id="KW-0460">Magnesium</keyword>
<keyword id="KW-0479">Metal-binding</keyword>
<keyword id="KW-0511">Multifunctional enzyme</keyword>
<keyword id="KW-0548">Nucleotidyltransferase</keyword>
<keyword id="KW-0573">Peptidoglycan synthesis</keyword>
<keyword id="KW-0677">Repeat</keyword>
<keyword id="KW-0808">Transferase</keyword>
<name>GLMU_STAAN</name>
<dbReference type="EC" id="2.7.7.23" evidence="1"/>
<dbReference type="EC" id="2.3.1.157" evidence="1"/>
<dbReference type="EMBL" id="BA000018">
    <property type="protein sequence ID" value="BAB41687.1"/>
    <property type="molecule type" value="Genomic_DNA"/>
</dbReference>
<dbReference type="PIR" id="D89816">
    <property type="entry name" value="D89816"/>
</dbReference>
<dbReference type="RefSeq" id="WP_001252543.1">
    <property type="nucleotide sequence ID" value="NC_002745.2"/>
</dbReference>
<dbReference type="SMR" id="Q7A7B4"/>
<dbReference type="EnsemblBacteria" id="BAB41687">
    <property type="protein sequence ID" value="BAB41687"/>
    <property type="gene ID" value="BAB41687"/>
</dbReference>
<dbReference type="KEGG" id="sau:SA0457"/>
<dbReference type="HOGENOM" id="CLU_029499_15_2_9"/>
<dbReference type="UniPathway" id="UPA00113">
    <property type="reaction ID" value="UER00532"/>
</dbReference>
<dbReference type="UniPathway" id="UPA00113">
    <property type="reaction ID" value="UER00533"/>
</dbReference>
<dbReference type="UniPathway" id="UPA00973"/>
<dbReference type="GO" id="GO:0005737">
    <property type="term" value="C:cytoplasm"/>
    <property type="evidence" value="ECO:0007669"/>
    <property type="project" value="UniProtKB-SubCell"/>
</dbReference>
<dbReference type="GO" id="GO:0016020">
    <property type="term" value="C:membrane"/>
    <property type="evidence" value="ECO:0007669"/>
    <property type="project" value="GOC"/>
</dbReference>
<dbReference type="GO" id="GO:0019134">
    <property type="term" value="F:glucosamine-1-phosphate N-acetyltransferase activity"/>
    <property type="evidence" value="ECO:0007669"/>
    <property type="project" value="UniProtKB-UniRule"/>
</dbReference>
<dbReference type="GO" id="GO:0000287">
    <property type="term" value="F:magnesium ion binding"/>
    <property type="evidence" value="ECO:0007669"/>
    <property type="project" value="UniProtKB-UniRule"/>
</dbReference>
<dbReference type="GO" id="GO:0003977">
    <property type="term" value="F:UDP-N-acetylglucosamine diphosphorylase activity"/>
    <property type="evidence" value="ECO:0007669"/>
    <property type="project" value="UniProtKB-UniRule"/>
</dbReference>
<dbReference type="GO" id="GO:0000902">
    <property type="term" value="P:cell morphogenesis"/>
    <property type="evidence" value="ECO:0007669"/>
    <property type="project" value="UniProtKB-UniRule"/>
</dbReference>
<dbReference type="GO" id="GO:0071555">
    <property type="term" value="P:cell wall organization"/>
    <property type="evidence" value="ECO:0007669"/>
    <property type="project" value="UniProtKB-KW"/>
</dbReference>
<dbReference type="GO" id="GO:0009245">
    <property type="term" value="P:lipid A biosynthetic process"/>
    <property type="evidence" value="ECO:0007669"/>
    <property type="project" value="UniProtKB-UniRule"/>
</dbReference>
<dbReference type="GO" id="GO:0009252">
    <property type="term" value="P:peptidoglycan biosynthetic process"/>
    <property type="evidence" value="ECO:0007669"/>
    <property type="project" value="UniProtKB-UniRule"/>
</dbReference>
<dbReference type="GO" id="GO:0008360">
    <property type="term" value="P:regulation of cell shape"/>
    <property type="evidence" value="ECO:0007669"/>
    <property type="project" value="UniProtKB-KW"/>
</dbReference>
<dbReference type="GO" id="GO:0006048">
    <property type="term" value="P:UDP-N-acetylglucosamine biosynthetic process"/>
    <property type="evidence" value="ECO:0007669"/>
    <property type="project" value="UniProtKB-UniPathway"/>
</dbReference>
<dbReference type="CDD" id="cd02540">
    <property type="entry name" value="GT2_GlmU_N_bac"/>
    <property type="match status" value="1"/>
</dbReference>
<dbReference type="CDD" id="cd03353">
    <property type="entry name" value="LbH_GlmU_C"/>
    <property type="match status" value="1"/>
</dbReference>
<dbReference type="Gene3D" id="2.160.10.10">
    <property type="entry name" value="Hexapeptide repeat proteins"/>
    <property type="match status" value="1"/>
</dbReference>
<dbReference type="Gene3D" id="3.90.550.10">
    <property type="entry name" value="Spore Coat Polysaccharide Biosynthesis Protein SpsA, Chain A"/>
    <property type="match status" value="1"/>
</dbReference>
<dbReference type="HAMAP" id="MF_01631">
    <property type="entry name" value="GlmU"/>
    <property type="match status" value="1"/>
</dbReference>
<dbReference type="InterPro" id="IPR005882">
    <property type="entry name" value="Bifunctional_GlmU"/>
</dbReference>
<dbReference type="InterPro" id="IPR050065">
    <property type="entry name" value="GlmU-like"/>
</dbReference>
<dbReference type="InterPro" id="IPR038009">
    <property type="entry name" value="GlmU_C_LbH"/>
</dbReference>
<dbReference type="InterPro" id="IPR001451">
    <property type="entry name" value="Hexapep"/>
</dbReference>
<dbReference type="InterPro" id="IPR018357">
    <property type="entry name" value="Hexapep_transf_CS"/>
</dbReference>
<dbReference type="InterPro" id="IPR005835">
    <property type="entry name" value="NTP_transferase_dom"/>
</dbReference>
<dbReference type="InterPro" id="IPR029044">
    <property type="entry name" value="Nucleotide-diphossugar_trans"/>
</dbReference>
<dbReference type="InterPro" id="IPR011004">
    <property type="entry name" value="Trimer_LpxA-like_sf"/>
</dbReference>
<dbReference type="NCBIfam" id="TIGR01173">
    <property type="entry name" value="glmU"/>
    <property type="match status" value="1"/>
</dbReference>
<dbReference type="NCBIfam" id="NF010934">
    <property type="entry name" value="PRK14354.1"/>
    <property type="match status" value="1"/>
</dbReference>
<dbReference type="PANTHER" id="PTHR43584:SF3">
    <property type="entry name" value="BIFUNCTIONAL PROTEIN GLMU"/>
    <property type="match status" value="1"/>
</dbReference>
<dbReference type="PANTHER" id="PTHR43584">
    <property type="entry name" value="NUCLEOTIDYL TRANSFERASE"/>
    <property type="match status" value="1"/>
</dbReference>
<dbReference type="Pfam" id="PF00132">
    <property type="entry name" value="Hexapep"/>
    <property type="match status" value="2"/>
</dbReference>
<dbReference type="Pfam" id="PF00483">
    <property type="entry name" value="NTP_transferase"/>
    <property type="match status" value="1"/>
</dbReference>
<dbReference type="SUPFAM" id="SSF53448">
    <property type="entry name" value="Nucleotide-diphospho-sugar transferases"/>
    <property type="match status" value="1"/>
</dbReference>
<dbReference type="SUPFAM" id="SSF51161">
    <property type="entry name" value="Trimeric LpxA-like enzymes"/>
    <property type="match status" value="1"/>
</dbReference>
<dbReference type="PROSITE" id="PS00101">
    <property type="entry name" value="HEXAPEP_TRANSFERASES"/>
    <property type="match status" value="1"/>
</dbReference>
<protein>
    <recommendedName>
        <fullName evidence="1">Bifunctional protein GlmU</fullName>
    </recommendedName>
    <domain>
        <recommendedName>
            <fullName evidence="1">UDP-N-acetylglucosamine pyrophosphorylase</fullName>
            <ecNumber evidence="1">2.7.7.23</ecNumber>
        </recommendedName>
        <alternativeName>
            <fullName evidence="1">N-acetylglucosamine-1-phosphate uridyltransferase</fullName>
        </alternativeName>
    </domain>
    <domain>
        <recommendedName>
            <fullName evidence="1">Glucosamine-1-phosphate N-acetyltransferase</fullName>
            <ecNumber evidence="1">2.3.1.157</ecNumber>
        </recommendedName>
    </domain>
</protein>
<comment type="function">
    <text evidence="1">Catalyzes the last two sequential reactions in the de novo biosynthetic pathway for UDP-N-acetylglucosamine (UDP-GlcNAc). The C-terminal domain catalyzes the transfer of acetyl group from acetyl coenzyme A to glucosamine-1-phosphate (GlcN-1-P) to produce N-acetylglucosamine-1-phosphate (GlcNAc-1-P), which is converted into UDP-GlcNAc by the transfer of uridine 5-monophosphate (from uridine 5-triphosphate), a reaction catalyzed by the N-terminal domain.</text>
</comment>
<comment type="catalytic activity">
    <reaction evidence="1">
        <text>alpha-D-glucosamine 1-phosphate + acetyl-CoA = N-acetyl-alpha-D-glucosamine 1-phosphate + CoA + H(+)</text>
        <dbReference type="Rhea" id="RHEA:13725"/>
        <dbReference type="ChEBI" id="CHEBI:15378"/>
        <dbReference type="ChEBI" id="CHEBI:57287"/>
        <dbReference type="ChEBI" id="CHEBI:57288"/>
        <dbReference type="ChEBI" id="CHEBI:57776"/>
        <dbReference type="ChEBI" id="CHEBI:58516"/>
        <dbReference type="EC" id="2.3.1.157"/>
    </reaction>
</comment>
<comment type="catalytic activity">
    <reaction evidence="1">
        <text>N-acetyl-alpha-D-glucosamine 1-phosphate + UTP + H(+) = UDP-N-acetyl-alpha-D-glucosamine + diphosphate</text>
        <dbReference type="Rhea" id="RHEA:13509"/>
        <dbReference type="ChEBI" id="CHEBI:15378"/>
        <dbReference type="ChEBI" id="CHEBI:33019"/>
        <dbReference type="ChEBI" id="CHEBI:46398"/>
        <dbReference type="ChEBI" id="CHEBI:57705"/>
        <dbReference type="ChEBI" id="CHEBI:57776"/>
        <dbReference type="EC" id="2.7.7.23"/>
    </reaction>
</comment>
<comment type="cofactor">
    <cofactor evidence="1">
        <name>Mg(2+)</name>
        <dbReference type="ChEBI" id="CHEBI:18420"/>
    </cofactor>
    <text evidence="1">Binds 1 Mg(2+) ion per subunit.</text>
</comment>
<comment type="pathway">
    <text evidence="1">Nucleotide-sugar biosynthesis; UDP-N-acetyl-alpha-D-glucosamine biosynthesis; N-acetyl-alpha-D-glucosamine 1-phosphate from alpha-D-glucosamine 6-phosphate (route II): step 2/2.</text>
</comment>
<comment type="pathway">
    <text evidence="1">Nucleotide-sugar biosynthesis; UDP-N-acetyl-alpha-D-glucosamine biosynthesis; UDP-N-acetyl-alpha-D-glucosamine from N-acetyl-alpha-D-glucosamine 1-phosphate: step 1/1.</text>
</comment>
<comment type="pathway">
    <text evidence="1">Bacterial outer membrane biogenesis; LPS lipid A biosynthesis.</text>
</comment>
<comment type="subunit">
    <text evidence="1">Homotrimer.</text>
</comment>
<comment type="subcellular location">
    <subcellularLocation>
        <location evidence="1">Cytoplasm</location>
    </subcellularLocation>
</comment>
<comment type="similarity">
    <text evidence="1">In the N-terminal section; belongs to the N-acetylglucosamine-1-phosphate uridyltransferase family.</text>
</comment>
<comment type="similarity">
    <text evidence="1">In the C-terminal section; belongs to the transferase hexapeptide repeat family.</text>
</comment>
<feature type="chain" id="PRO_0000068710" description="Bifunctional protein GlmU">
    <location>
        <begin position="1"/>
        <end position="450"/>
    </location>
</feature>
<feature type="region of interest" description="Pyrophosphorylase" evidence="1">
    <location>
        <begin position="1"/>
        <end position="229"/>
    </location>
</feature>
<feature type="region of interest" description="Linker" evidence="1">
    <location>
        <begin position="230"/>
        <end position="250"/>
    </location>
</feature>
<feature type="region of interest" description="N-acetyltransferase" evidence="1">
    <location>
        <begin position="251"/>
        <end position="450"/>
    </location>
</feature>
<feature type="active site" description="Proton acceptor" evidence="1">
    <location>
        <position position="362"/>
    </location>
</feature>
<feature type="binding site" evidence="1">
    <location>
        <begin position="8"/>
        <end position="11"/>
    </location>
    <ligand>
        <name>UDP-N-acetyl-alpha-D-glucosamine</name>
        <dbReference type="ChEBI" id="CHEBI:57705"/>
    </ligand>
</feature>
<feature type="binding site" evidence="1">
    <location>
        <position position="22"/>
    </location>
    <ligand>
        <name>UDP-N-acetyl-alpha-D-glucosamine</name>
        <dbReference type="ChEBI" id="CHEBI:57705"/>
    </ligand>
</feature>
<feature type="binding site" evidence="1">
    <location>
        <position position="72"/>
    </location>
    <ligand>
        <name>UDP-N-acetyl-alpha-D-glucosamine</name>
        <dbReference type="ChEBI" id="CHEBI:57705"/>
    </ligand>
</feature>
<feature type="binding site" evidence="1">
    <location>
        <begin position="77"/>
        <end position="78"/>
    </location>
    <ligand>
        <name>UDP-N-acetyl-alpha-D-glucosamine</name>
        <dbReference type="ChEBI" id="CHEBI:57705"/>
    </ligand>
</feature>
<feature type="binding site" evidence="1">
    <location>
        <position position="102"/>
    </location>
    <ligand>
        <name>Mg(2+)</name>
        <dbReference type="ChEBI" id="CHEBI:18420"/>
    </ligand>
</feature>
<feature type="binding site" evidence="1">
    <location>
        <position position="139"/>
    </location>
    <ligand>
        <name>UDP-N-acetyl-alpha-D-glucosamine</name>
        <dbReference type="ChEBI" id="CHEBI:57705"/>
    </ligand>
</feature>
<feature type="binding site" evidence="1">
    <location>
        <position position="154"/>
    </location>
    <ligand>
        <name>UDP-N-acetyl-alpha-D-glucosamine</name>
        <dbReference type="ChEBI" id="CHEBI:57705"/>
    </ligand>
</feature>
<feature type="binding site" evidence="1">
    <location>
        <position position="227"/>
    </location>
    <ligand>
        <name>Mg(2+)</name>
        <dbReference type="ChEBI" id="CHEBI:18420"/>
    </ligand>
</feature>
<feature type="binding site" evidence="1">
    <location>
        <position position="227"/>
    </location>
    <ligand>
        <name>UDP-N-acetyl-alpha-D-glucosamine</name>
        <dbReference type="ChEBI" id="CHEBI:57705"/>
    </ligand>
</feature>
<feature type="binding site" evidence="1">
    <location>
        <position position="332"/>
    </location>
    <ligand>
        <name>UDP-N-acetyl-alpha-D-glucosamine</name>
        <dbReference type="ChEBI" id="CHEBI:57705"/>
    </ligand>
</feature>
<feature type="binding site" evidence="1">
    <location>
        <position position="350"/>
    </location>
    <ligand>
        <name>UDP-N-acetyl-alpha-D-glucosamine</name>
        <dbReference type="ChEBI" id="CHEBI:57705"/>
    </ligand>
</feature>
<feature type="binding site" evidence="1">
    <location>
        <position position="365"/>
    </location>
    <ligand>
        <name>UDP-N-acetyl-alpha-D-glucosamine</name>
        <dbReference type="ChEBI" id="CHEBI:57705"/>
    </ligand>
</feature>
<feature type="binding site" evidence="1">
    <location>
        <position position="376"/>
    </location>
    <ligand>
        <name>UDP-N-acetyl-alpha-D-glucosamine</name>
        <dbReference type="ChEBI" id="CHEBI:57705"/>
    </ligand>
</feature>
<feature type="binding site" evidence="1">
    <location>
        <begin position="385"/>
        <end position="386"/>
    </location>
    <ligand>
        <name>acetyl-CoA</name>
        <dbReference type="ChEBI" id="CHEBI:57288"/>
    </ligand>
</feature>
<feature type="binding site" evidence="1">
    <location>
        <position position="422"/>
    </location>
    <ligand>
        <name>acetyl-CoA</name>
        <dbReference type="ChEBI" id="CHEBI:57288"/>
    </ligand>
</feature>
<feature type="binding site" evidence="1">
    <location>
        <position position="439"/>
    </location>
    <ligand>
        <name>acetyl-CoA</name>
        <dbReference type="ChEBI" id="CHEBI:57288"/>
    </ligand>
</feature>
<sequence length="450" mass="48516">MRRHAIILAAGKGTRMKSKKYKVLHEVAGKPMVEHVLESVKGSGVDQVVTIVGHGAESVKGHLGERSLYSFQEKQLGTAHAVQMAKSHLEDKEGTTIVVCGDTPLITKETLETLIAHHEDANAQATVLSASIQQPYGYGRIVRNASGRLERIVEEKDATQAEKDINEISSGIFAFNNKTLFEKLTQVKNDNAQGEYYLPDVLSLILNDGGIVEVYRTNDVEEIMGVNDRVMLSQAEKAMQRRTNHYHMLNGVTIIDPDSTFIGPDVTIGSDTVIEPGVRINGRTEIGEDVVIGQYSEINNSTIENGACIQQSVVNDASVGANTKVGPFAQLRPGAQLGADVKVGNFVEIKKADLKDGAKVSHLSYIGDAVIGERTNIGCGTITVNYDGENKFKTIVGKDSFVGCNVNLVAPVTIGDDVLVAAGSTITDDVPNDSLAVARARQTTKEGYRK</sequence>